<accession>Q0T2K8</accession>
<organism>
    <name type="scientific">Shigella flexneri serotype 5b (strain 8401)</name>
    <dbReference type="NCBI Taxonomy" id="373384"/>
    <lineage>
        <taxon>Bacteria</taxon>
        <taxon>Pseudomonadati</taxon>
        <taxon>Pseudomonadota</taxon>
        <taxon>Gammaproteobacteria</taxon>
        <taxon>Enterobacterales</taxon>
        <taxon>Enterobacteriaceae</taxon>
        <taxon>Shigella</taxon>
    </lineage>
</organism>
<proteinExistence type="inferred from homology"/>
<feature type="chain" id="PRO_0000390239" description="NADH-quinone oxidoreductase subunit K">
    <location>
        <begin position="1"/>
        <end position="100"/>
    </location>
</feature>
<feature type="transmembrane region" description="Helical" evidence="1">
    <location>
        <begin position="4"/>
        <end position="24"/>
    </location>
</feature>
<feature type="transmembrane region" description="Helical" evidence="1">
    <location>
        <begin position="28"/>
        <end position="48"/>
    </location>
</feature>
<feature type="transmembrane region" description="Helical" evidence="1">
    <location>
        <begin position="60"/>
        <end position="80"/>
    </location>
</feature>
<evidence type="ECO:0000255" key="1">
    <source>
        <dbReference type="HAMAP-Rule" id="MF_01456"/>
    </source>
</evidence>
<comment type="function">
    <text evidence="1">NDH-1 shuttles electrons from NADH, via FMN and iron-sulfur (Fe-S) centers, to quinones in the respiratory chain. The immediate electron acceptor for the enzyme in this species is believed to be ubiquinone. Couples the redox reaction to proton translocation (for every two electrons transferred, four hydrogen ions are translocated across the cytoplasmic membrane), and thus conserves the redox energy in a proton gradient.</text>
</comment>
<comment type="catalytic activity">
    <reaction evidence="1">
        <text>a quinone + NADH + 5 H(+)(in) = a quinol + NAD(+) + 4 H(+)(out)</text>
        <dbReference type="Rhea" id="RHEA:57888"/>
        <dbReference type="ChEBI" id="CHEBI:15378"/>
        <dbReference type="ChEBI" id="CHEBI:24646"/>
        <dbReference type="ChEBI" id="CHEBI:57540"/>
        <dbReference type="ChEBI" id="CHEBI:57945"/>
        <dbReference type="ChEBI" id="CHEBI:132124"/>
    </reaction>
</comment>
<comment type="subunit">
    <text evidence="1">NDH-1 is composed of 13 different subunits. Subunits NuoA, H, J, K, L, M, N constitute the membrane sector of the complex.</text>
</comment>
<comment type="subcellular location">
    <subcellularLocation>
        <location evidence="1">Cell inner membrane</location>
        <topology evidence="1">Multi-pass membrane protein</topology>
    </subcellularLocation>
</comment>
<comment type="similarity">
    <text evidence="1">Belongs to the complex I subunit 4L family.</text>
</comment>
<dbReference type="EC" id="7.1.1.-" evidence="1"/>
<dbReference type="EMBL" id="CP000266">
    <property type="protein sequence ID" value="ABF04457.1"/>
    <property type="molecule type" value="Genomic_DNA"/>
</dbReference>
<dbReference type="RefSeq" id="WP_000612644.1">
    <property type="nucleotide sequence ID" value="NC_008258.1"/>
</dbReference>
<dbReference type="SMR" id="Q0T2K8"/>
<dbReference type="GeneID" id="93033872"/>
<dbReference type="KEGG" id="sfv:SFV_2346"/>
<dbReference type="HOGENOM" id="CLU_144724_0_1_6"/>
<dbReference type="Proteomes" id="UP000000659">
    <property type="component" value="Chromosome"/>
</dbReference>
<dbReference type="GO" id="GO:0030964">
    <property type="term" value="C:NADH dehydrogenase complex"/>
    <property type="evidence" value="ECO:0007669"/>
    <property type="project" value="TreeGrafter"/>
</dbReference>
<dbReference type="GO" id="GO:0005886">
    <property type="term" value="C:plasma membrane"/>
    <property type="evidence" value="ECO:0007669"/>
    <property type="project" value="UniProtKB-SubCell"/>
</dbReference>
<dbReference type="GO" id="GO:0050136">
    <property type="term" value="F:NADH:ubiquinone reductase (non-electrogenic) activity"/>
    <property type="evidence" value="ECO:0007669"/>
    <property type="project" value="UniProtKB-UniRule"/>
</dbReference>
<dbReference type="GO" id="GO:0048038">
    <property type="term" value="F:quinone binding"/>
    <property type="evidence" value="ECO:0007669"/>
    <property type="project" value="UniProtKB-KW"/>
</dbReference>
<dbReference type="GO" id="GO:0042773">
    <property type="term" value="P:ATP synthesis coupled electron transport"/>
    <property type="evidence" value="ECO:0007669"/>
    <property type="project" value="InterPro"/>
</dbReference>
<dbReference type="FunFam" id="1.10.287.3510:FF:000001">
    <property type="entry name" value="NADH-quinone oxidoreductase subunit K"/>
    <property type="match status" value="1"/>
</dbReference>
<dbReference type="Gene3D" id="1.10.287.3510">
    <property type="match status" value="1"/>
</dbReference>
<dbReference type="HAMAP" id="MF_01456">
    <property type="entry name" value="NDH1_NuoK"/>
    <property type="match status" value="1"/>
</dbReference>
<dbReference type="InterPro" id="IPR001133">
    <property type="entry name" value="NADH_UbQ_OxRdtase_chain4L/K"/>
</dbReference>
<dbReference type="InterPro" id="IPR039428">
    <property type="entry name" value="NUOK/Mnh_C1-like"/>
</dbReference>
<dbReference type="NCBIfam" id="NF004319">
    <property type="entry name" value="PRK05715.1-1"/>
    <property type="match status" value="1"/>
</dbReference>
<dbReference type="NCBIfam" id="NF004320">
    <property type="entry name" value="PRK05715.1-2"/>
    <property type="match status" value="1"/>
</dbReference>
<dbReference type="PANTHER" id="PTHR11434:SF16">
    <property type="entry name" value="NADH-UBIQUINONE OXIDOREDUCTASE CHAIN 4L"/>
    <property type="match status" value="1"/>
</dbReference>
<dbReference type="PANTHER" id="PTHR11434">
    <property type="entry name" value="NADH-UBIQUINONE OXIDOREDUCTASE SUBUNIT ND4L"/>
    <property type="match status" value="1"/>
</dbReference>
<dbReference type="Pfam" id="PF00420">
    <property type="entry name" value="Oxidored_q2"/>
    <property type="match status" value="1"/>
</dbReference>
<reference key="1">
    <citation type="journal article" date="2006" name="BMC Genomics">
        <title>Complete genome sequence of Shigella flexneri 5b and comparison with Shigella flexneri 2a.</title>
        <authorList>
            <person name="Nie H."/>
            <person name="Yang F."/>
            <person name="Zhang X."/>
            <person name="Yang J."/>
            <person name="Chen L."/>
            <person name="Wang J."/>
            <person name="Xiong Z."/>
            <person name="Peng J."/>
            <person name="Sun L."/>
            <person name="Dong J."/>
            <person name="Xue Y."/>
            <person name="Xu X."/>
            <person name="Chen S."/>
            <person name="Yao Z."/>
            <person name="Shen Y."/>
            <person name="Jin Q."/>
        </authorList>
    </citation>
    <scope>NUCLEOTIDE SEQUENCE [LARGE SCALE GENOMIC DNA]</scope>
    <source>
        <strain>8401</strain>
    </source>
</reference>
<keyword id="KW-0997">Cell inner membrane</keyword>
<keyword id="KW-1003">Cell membrane</keyword>
<keyword id="KW-0472">Membrane</keyword>
<keyword id="KW-0520">NAD</keyword>
<keyword id="KW-0874">Quinone</keyword>
<keyword id="KW-1278">Translocase</keyword>
<keyword id="KW-0812">Transmembrane</keyword>
<keyword id="KW-1133">Transmembrane helix</keyword>
<keyword id="KW-0813">Transport</keyword>
<keyword id="KW-0830">Ubiquinone</keyword>
<gene>
    <name evidence="1" type="primary">nuoK</name>
    <name type="ordered locus">SFV_2346</name>
</gene>
<name>NUOK_SHIF8</name>
<sequence length="100" mass="10845">MIPLQHGLILAAILFVLGLTGLVIRRNLLFMLIGLEIMINASALAFVVAGSYWGQTDGQVMYILAISLAAAEASIGLALLLQLHRRRQNLNIDSVSEMRG</sequence>
<protein>
    <recommendedName>
        <fullName evidence="1">NADH-quinone oxidoreductase subunit K</fullName>
        <ecNumber evidence="1">7.1.1.-</ecNumber>
    </recommendedName>
    <alternativeName>
        <fullName evidence="1">NADH dehydrogenase I subunit K</fullName>
    </alternativeName>
    <alternativeName>
        <fullName evidence="1">NDH-1 subunit K</fullName>
    </alternativeName>
</protein>